<dbReference type="EMBL" id="DQ864733">
    <property type="protein sequence ID" value="ABI49013.1"/>
    <property type="molecule type" value="Genomic_DNA"/>
</dbReference>
<dbReference type="RefSeq" id="YP_740468.1">
    <property type="nucleotide sequence ID" value="NC_008334.1"/>
</dbReference>
<dbReference type="SMR" id="Q09MI5"/>
<dbReference type="GeneID" id="4271237"/>
<dbReference type="KEGG" id="cit:4271237"/>
<dbReference type="GO" id="GO:0009535">
    <property type="term" value="C:chloroplast thylakoid membrane"/>
    <property type="evidence" value="ECO:0007669"/>
    <property type="project" value="UniProtKB-SubCell"/>
</dbReference>
<dbReference type="GO" id="GO:0009512">
    <property type="term" value="C:cytochrome b6f complex"/>
    <property type="evidence" value="ECO:0007669"/>
    <property type="project" value="InterPro"/>
</dbReference>
<dbReference type="GO" id="GO:0045158">
    <property type="term" value="F:electron transporter, transferring electrons within cytochrome b6/f complex of photosystem II activity"/>
    <property type="evidence" value="ECO:0007669"/>
    <property type="project" value="InterPro"/>
</dbReference>
<dbReference type="GO" id="GO:0017004">
    <property type="term" value="P:cytochrome complex assembly"/>
    <property type="evidence" value="ECO:0007669"/>
    <property type="project" value="UniProtKB-UniRule"/>
</dbReference>
<dbReference type="GO" id="GO:0015979">
    <property type="term" value="P:photosynthesis"/>
    <property type="evidence" value="ECO:0007669"/>
    <property type="project" value="UniProtKB-KW"/>
</dbReference>
<dbReference type="HAMAP" id="MF_00395">
    <property type="entry name" value="Cytb6_f_PetN"/>
    <property type="match status" value="1"/>
</dbReference>
<dbReference type="InterPro" id="IPR036143">
    <property type="entry name" value="Cytochr_b6-f_cplx_su8_sf"/>
</dbReference>
<dbReference type="InterPro" id="IPR005497">
    <property type="entry name" value="Cytochrome_b6-f_cplx_su8"/>
</dbReference>
<dbReference type="Pfam" id="PF03742">
    <property type="entry name" value="PetN"/>
    <property type="match status" value="1"/>
</dbReference>
<dbReference type="SUPFAM" id="SSF103451">
    <property type="entry name" value="PetN subunit of the cytochrome b6f complex"/>
    <property type="match status" value="1"/>
</dbReference>
<feature type="chain" id="PRO_0000275545" description="Cytochrome b6-f complex subunit 8">
    <location>
        <begin position="1"/>
        <end position="29"/>
    </location>
</feature>
<feature type="transmembrane region" description="Helical" evidence="1">
    <location>
        <begin position="3"/>
        <end position="23"/>
    </location>
</feature>
<proteinExistence type="inferred from homology"/>
<geneLocation type="chloroplast"/>
<evidence type="ECO:0000255" key="1">
    <source>
        <dbReference type="HAMAP-Rule" id="MF_00395"/>
    </source>
</evidence>
<reference key="1">
    <citation type="journal article" date="2006" name="BMC Plant Biol.">
        <title>The complete chloroplast genome sequence of Citrus sinensis (L.) Osbeck var 'Ridge Pineapple': organization and phylogenetic relationships to other angiosperms.</title>
        <authorList>
            <person name="Bausher M.G."/>
            <person name="Singh N.D."/>
            <person name="Lee S.-B."/>
            <person name="Jansen R.K."/>
            <person name="Daniell H."/>
        </authorList>
    </citation>
    <scope>NUCLEOTIDE SEQUENCE [LARGE SCALE GENOMIC DNA]</scope>
    <source>
        <strain>cv. Osbeck var. Ridge Pineapple</strain>
    </source>
</reference>
<gene>
    <name evidence="1" type="primary">petN</name>
</gene>
<name>PETN_CITSI</name>
<organism>
    <name type="scientific">Citrus sinensis</name>
    <name type="common">Sweet orange</name>
    <name type="synonym">Citrus aurantium var. sinensis</name>
    <dbReference type="NCBI Taxonomy" id="2711"/>
    <lineage>
        <taxon>Eukaryota</taxon>
        <taxon>Viridiplantae</taxon>
        <taxon>Streptophyta</taxon>
        <taxon>Embryophyta</taxon>
        <taxon>Tracheophyta</taxon>
        <taxon>Spermatophyta</taxon>
        <taxon>Magnoliopsida</taxon>
        <taxon>eudicotyledons</taxon>
        <taxon>Gunneridae</taxon>
        <taxon>Pentapetalae</taxon>
        <taxon>rosids</taxon>
        <taxon>malvids</taxon>
        <taxon>Sapindales</taxon>
        <taxon>Rutaceae</taxon>
        <taxon>Aurantioideae</taxon>
        <taxon>Citrus</taxon>
    </lineage>
</organism>
<sequence length="29" mass="3170">MDIVSLAWAALMVVFTFSLSLVVWGRSGL</sequence>
<protein>
    <recommendedName>
        <fullName evidence="1">Cytochrome b6-f complex subunit 8</fullName>
    </recommendedName>
    <alternativeName>
        <fullName evidence="1">Cytochrome b6-f complex subunit PetN</fullName>
    </alternativeName>
    <alternativeName>
        <fullName evidence="1">Cytochrome b6-f complex subunit VIII</fullName>
    </alternativeName>
</protein>
<accession>Q09MI5</accession>
<keyword id="KW-0150">Chloroplast</keyword>
<keyword id="KW-0249">Electron transport</keyword>
<keyword id="KW-0472">Membrane</keyword>
<keyword id="KW-0602">Photosynthesis</keyword>
<keyword id="KW-0934">Plastid</keyword>
<keyword id="KW-0793">Thylakoid</keyword>
<keyword id="KW-0812">Transmembrane</keyword>
<keyword id="KW-1133">Transmembrane helix</keyword>
<keyword id="KW-0813">Transport</keyword>
<comment type="function">
    <text evidence="1">Component of the cytochrome b6-f complex, which mediates electron transfer between photosystem II (PSII) and photosystem I (PSI), cyclic electron flow around PSI, and state transitions.</text>
</comment>
<comment type="subunit">
    <text evidence="1">The 4 large subunits of the cytochrome b6-f complex are cytochrome b6, subunit IV (17 kDa polypeptide, PetD), cytochrome f and the Rieske protein, while the 4 small subunits are PetG, PetL, PetM and PetN. The complex functions as a dimer.</text>
</comment>
<comment type="subcellular location">
    <subcellularLocation>
        <location>Plastid</location>
        <location>Chloroplast thylakoid membrane</location>
        <topology>Single-pass membrane protein</topology>
    </subcellularLocation>
</comment>
<comment type="similarity">
    <text evidence="1">Belongs to the PetN family.</text>
</comment>